<organism>
    <name type="scientific">Paramagnetospirillum magneticum (strain ATCC 700264 / AMB-1)</name>
    <name type="common">Magnetospirillum magneticum</name>
    <dbReference type="NCBI Taxonomy" id="342108"/>
    <lineage>
        <taxon>Bacteria</taxon>
        <taxon>Pseudomonadati</taxon>
        <taxon>Pseudomonadota</taxon>
        <taxon>Alphaproteobacteria</taxon>
        <taxon>Rhodospirillales</taxon>
        <taxon>Magnetospirillaceae</taxon>
        <taxon>Paramagnetospirillum</taxon>
    </lineage>
</organism>
<reference key="1">
    <citation type="journal article" date="2005" name="DNA Res.">
        <title>Complete genome sequence of the facultative anaerobic magnetotactic bacterium Magnetospirillum sp. strain AMB-1.</title>
        <authorList>
            <person name="Matsunaga T."/>
            <person name="Okamura Y."/>
            <person name="Fukuda Y."/>
            <person name="Wahyudi A.T."/>
            <person name="Murase Y."/>
            <person name="Takeyama H."/>
        </authorList>
    </citation>
    <scope>NUCLEOTIDE SEQUENCE [LARGE SCALE GENOMIC DNA]</scope>
    <source>
        <strain>ATCC 700264 / AMB-1</strain>
    </source>
</reference>
<feature type="chain" id="PRO_0000241952" description="Malate dehydrogenase">
    <location>
        <begin position="1"/>
        <end position="319"/>
    </location>
</feature>
<feature type="active site" description="Proton acceptor" evidence="1">
    <location>
        <position position="176"/>
    </location>
</feature>
<feature type="binding site" evidence="1">
    <location>
        <begin position="10"/>
        <end position="15"/>
    </location>
    <ligand>
        <name>NAD(+)</name>
        <dbReference type="ChEBI" id="CHEBI:57540"/>
    </ligand>
</feature>
<feature type="binding site" evidence="1">
    <location>
        <position position="34"/>
    </location>
    <ligand>
        <name>NAD(+)</name>
        <dbReference type="ChEBI" id="CHEBI:57540"/>
    </ligand>
</feature>
<feature type="binding site" evidence="1">
    <location>
        <position position="83"/>
    </location>
    <ligand>
        <name>substrate</name>
    </ligand>
</feature>
<feature type="binding site" evidence="1">
    <location>
        <position position="89"/>
    </location>
    <ligand>
        <name>substrate</name>
    </ligand>
</feature>
<feature type="binding site" evidence="1">
    <location>
        <position position="96"/>
    </location>
    <ligand>
        <name>NAD(+)</name>
        <dbReference type="ChEBI" id="CHEBI:57540"/>
    </ligand>
</feature>
<feature type="binding site" evidence="1">
    <location>
        <begin position="119"/>
        <end position="121"/>
    </location>
    <ligand>
        <name>NAD(+)</name>
        <dbReference type="ChEBI" id="CHEBI:57540"/>
    </ligand>
</feature>
<feature type="binding site" evidence="1">
    <location>
        <position position="121"/>
    </location>
    <ligand>
        <name>substrate</name>
    </ligand>
</feature>
<feature type="binding site" evidence="1">
    <location>
        <position position="152"/>
    </location>
    <ligand>
        <name>substrate</name>
    </ligand>
</feature>
<keyword id="KW-0520">NAD</keyword>
<keyword id="KW-0560">Oxidoreductase</keyword>
<keyword id="KW-0816">Tricarboxylic acid cycle</keyword>
<gene>
    <name evidence="1" type="primary">mdh</name>
    <name type="ordered locus">amb3957</name>
</gene>
<protein>
    <recommendedName>
        <fullName evidence="1">Malate dehydrogenase</fullName>
        <ecNumber evidence="1">1.1.1.37</ecNumber>
    </recommendedName>
</protein>
<sequence length="319" mass="33429">MARKKIALVGSGNIGGTLAHLIGLKELGDVVMFDIAEGIPQGKGLDILESTPVEGVDCRYSGANDYSAIAGADVVIVTAGVPRKPGMSRDDLVGINLKVMAAVGEGIKKNCPGAFVICITNPLDVMVWALQHYSGVPANMIVGMAGVLDSARFRTFLCEEFNVSVEDVTAFVLGGHGDTMVPLVRYSTVAGIPLPDLVKMGWTTQEKLDQIVQRTRDGGAEIVNLLKTGSAYYAPAASGVAMAEAFLKDKKRVLPVATLVKGGTYGQPDDVFVGVPVVIGEGGVERIVEIELNAAEQAEFNKSADAVRGLVKVAKGLMG</sequence>
<evidence type="ECO:0000255" key="1">
    <source>
        <dbReference type="HAMAP-Rule" id="MF_00487"/>
    </source>
</evidence>
<accession>Q2W064</accession>
<dbReference type="EC" id="1.1.1.37" evidence="1"/>
<dbReference type="EMBL" id="AP007255">
    <property type="protein sequence ID" value="BAE52761.1"/>
    <property type="molecule type" value="Genomic_DNA"/>
</dbReference>
<dbReference type="RefSeq" id="WP_011386311.1">
    <property type="nucleotide sequence ID" value="NC_007626.1"/>
</dbReference>
<dbReference type="SMR" id="Q2W064"/>
<dbReference type="STRING" id="342108.amb3957"/>
<dbReference type="KEGG" id="mag:amb3957"/>
<dbReference type="HOGENOM" id="CLU_045401_2_1_5"/>
<dbReference type="OrthoDB" id="9802969at2"/>
<dbReference type="Proteomes" id="UP000007058">
    <property type="component" value="Chromosome"/>
</dbReference>
<dbReference type="GO" id="GO:0004459">
    <property type="term" value="F:L-lactate dehydrogenase activity"/>
    <property type="evidence" value="ECO:0007669"/>
    <property type="project" value="TreeGrafter"/>
</dbReference>
<dbReference type="GO" id="GO:0030060">
    <property type="term" value="F:L-malate dehydrogenase (NAD+) activity"/>
    <property type="evidence" value="ECO:0007669"/>
    <property type="project" value="UniProtKB-UniRule"/>
</dbReference>
<dbReference type="GO" id="GO:0006089">
    <property type="term" value="P:lactate metabolic process"/>
    <property type="evidence" value="ECO:0007669"/>
    <property type="project" value="TreeGrafter"/>
</dbReference>
<dbReference type="GO" id="GO:0006099">
    <property type="term" value="P:tricarboxylic acid cycle"/>
    <property type="evidence" value="ECO:0007669"/>
    <property type="project" value="UniProtKB-UniRule"/>
</dbReference>
<dbReference type="CDD" id="cd01339">
    <property type="entry name" value="LDH-like_MDH"/>
    <property type="match status" value="1"/>
</dbReference>
<dbReference type="FunFam" id="3.40.50.720:FF:000018">
    <property type="entry name" value="Malate dehydrogenase"/>
    <property type="match status" value="1"/>
</dbReference>
<dbReference type="FunFam" id="3.90.110.10:FF:000004">
    <property type="entry name" value="Malate dehydrogenase"/>
    <property type="match status" value="1"/>
</dbReference>
<dbReference type="Gene3D" id="3.90.110.10">
    <property type="entry name" value="Lactate dehydrogenase/glycoside hydrolase, family 4, C-terminal"/>
    <property type="match status" value="1"/>
</dbReference>
<dbReference type="Gene3D" id="3.40.50.720">
    <property type="entry name" value="NAD(P)-binding Rossmann-like Domain"/>
    <property type="match status" value="1"/>
</dbReference>
<dbReference type="HAMAP" id="MF_00487">
    <property type="entry name" value="Malate_dehydrog_3"/>
    <property type="match status" value="1"/>
</dbReference>
<dbReference type="InterPro" id="IPR001557">
    <property type="entry name" value="L-lactate/malate_DH"/>
</dbReference>
<dbReference type="InterPro" id="IPR022383">
    <property type="entry name" value="Lactate/malate_DH_C"/>
</dbReference>
<dbReference type="InterPro" id="IPR001236">
    <property type="entry name" value="Lactate/malate_DH_N"/>
</dbReference>
<dbReference type="InterPro" id="IPR015955">
    <property type="entry name" value="Lactate_DH/Glyco_Ohase_4_C"/>
</dbReference>
<dbReference type="InterPro" id="IPR011275">
    <property type="entry name" value="Malate_DH_type3"/>
</dbReference>
<dbReference type="InterPro" id="IPR036291">
    <property type="entry name" value="NAD(P)-bd_dom_sf"/>
</dbReference>
<dbReference type="NCBIfam" id="TIGR01763">
    <property type="entry name" value="MalateDH_bact"/>
    <property type="match status" value="1"/>
</dbReference>
<dbReference type="NCBIfam" id="NF004863">
    <property type="entry name" value="PRK06223.1"/>
    <property type="match status" value="1"/>
</dbReference>
<dbReference type="PANTHER" id="PTHR43128">
    <property type="entry name" value="L-2-HYDROXYCARBOXYLATE DEHYDROGENASE (NAD(P)(+))"/>
    <property type="match status" value="1"/>
</dbReference>
<dbReference type="PANTHER" id="PTHR43128:SF16">
    <property type="entry name" value="L-LACTATE DEHYDROGENASE"/>
    <property type="match status" value="1"/>
</dbReference>
<dbReference type="Pfam" id="PF02866">
    <property type="entry name" value="Ldh_1_C"/>
    <property type="match status" value="1"/>
</dbReference>
<dbReference type="Pfam" id="PF00056">
    <property type="entry name" value="Ldh_1_N"/>
    <property type="match status" value="1"/>
</dbReference>
<dbReference type="PIRSF" id="PIRSF000102">
    <property type="entry name" value="Lac_mal_DH"/>
    <property type="match status" value="1"/>
</dbReference>
<dbReference type="PRINTS" id="PR00086">
    <property type="entry name" value="LLDHDRGNASE"/>
</dbReference>
<dbReference type="SUPFAM" id="SSF56327">
    <property type="entry name" value="LDH C-terminal domain-like"/>
    <property type="match status" value="1"/>
</dbReference>
<dbReference type="SUPFAM" id="SSF51735">
    <property type="entry name" value="NAD(P)-binding Rossmann-fold domains"/>
    <property type="match status" value="1"/>
</dbReference>
<proteinExistence type="inferred from homology"/>
<name>MDH_PARM1</name>
<comment type="function">
    <text evidence="1">Catalyzes the reversible oxidation of malate to oxaloacetate.</text>
</comment>
<comment type="catalytic activity">
    <reaction evidence="1">
        <text>(S)-malate + NAD(+) = oxaloacetate + NADH + H(+)</text>
        <dbReference type="Rhea" id="RHEA:21432"/>
        <dbReference type="ChEBI" id="CHEBI:15378"/>
        <dbReference type="ChEBI" id="CHEBI:15589"/>
        <dbReference type="ChEBI" id="CHEBI:16452"/>
        <dbReference type="ChEBI" id="CHEBI:57540"/>
        <dbReference type="ChEBI" id="CHEBI:57945"/>
        <dbReference type="EC" id="1.1.1.37"/>
    </reaction>
</comment>
<comment type="similarity">
    <text evidence="1">Belongs to the LDH/MDH superfamily. MDH type 3 family.</text>
</comment>